<name>ISPE_PROMH</name>
<dbReference type="EC" id="2.7.1.148" evidence="1"/>
<dbReference type="EMBL" id="AM942759">
    <property type="protein sequence ID" value="CAR42340.1"/>
    <property type="molecule type" value="Genomic_DNA"/>
</dbReference>
<dbReference type="RefSeq" id="WP_012367850.1">
    <property type="nucleotide sequence ID" value="NC_010554.1"/>
</dbReference>
<dbReference type="SMR" id="B4EVR4"/>
<dbReference type="EnsemblBacteria" id="CAR42340">
    <property type="protein sequence ID" value="CAR42340"/>
    <property type="gene ID" value="PMI1084"/>
</dbReference>
<dbReference type="GeneID" id="6803433"/>
<dbReference type="KEGG" id="pmr:PMI1084"/>
<dbReference type="PATRIC" id="fig|529507.6.peg.1048"/>
<dbReference type="eggNOG" id="COG1947">
    <property type="taxonomic scope" value="Bacteria"/>
</dbReference>
<dbReference type="HOGENOM" id="CLU_053057_3_0_6"/>
<dbReference type="UniPathway" id="UPA00056">
    <property type="reaction ID" value="UER00094"/>
</dbReference>
<dbReference type="Proteomes" id="UP000008319">
    <property type="component" value="Chromosome"/>
</dbReference>
<dbReference type="GO" id="GO:0050515">
    <property type="term" value="F:4-(cytidine 5'-diphospho)-2-C-methyl-D-erythritol kinase activity"/>
    <property type="evidence" value="ECO:0007669"/>
    <property type="project" value="UniProtKB-UniRule"/>
</dbReference>
<dbReference type="GO" id="GO:0005524">
    <property type="term" value="F:ATP binding"/>
    <property type="evidence" value="ECO:0007669"/>
    <property type="project" value="UniProtKB-UniRule"/>
</dbReference>
<dbReference type="GO" id="GO:0019288">
    <property type="term" value="P:isopentenyl diphosphate biosynthetic process, methylerythritol 4-phosphate pathway"/>
    <property type="evidence" value="ECO:0007669"/>
    <property type="project" value="UniProtKB-UniRule"/>
</dbReference>
<dbReference type="GO" id="GO:0016114">
    <property type="term" value="P:terpenoid biosynthetic process"/>
    <property type="evidence" value="ECO:0007669"/>
    <property type="project" value="InterPro"/>
</dbReference>
<dbReference type="FunFam" id="3.30.230.10:FF:000022">
    <property type="entry name" value="4-diphosphocytidyl-2-C-methyl-D-erythritol kinase"/>
    <property type="match status" value="1"/>
</dbReference>
<dbReference type="FunFam" id="3.30.70.890:FF:000004">
    <property type="entry name" value="4-diphosphocytidyl-2-C-methyl-D-erythritol kinase"/>
    <property type="match status" value="1"/>
</dbReference>
<dbReference type="Gene3D" id="3.30.230.10">
    <property type="match status" value="1"/>
</dbReference>
<dbReference type="Gene3D" id="3.30.70.890">
    <property type="entry name" value="GHMP kinase, C-terminal domain"/>
    <property type="match status" value="1"/>
</dbReference>
<dbReference type="HAMAP" id="MF_00061">
    <property type="entry name" value="IspE"/>
    <property type="match status" value="1"/>
</dbReference>
<dbReference type="InterPro" id="IPR013750">
    <property type="entry name" value="GHMP_kinase_C_dom"/>
</dbReference>
<dbReference type="InterPro" id="IPR036554">
    <property type="entry name" value="GHMP_kinase_C_sf"/>
</dbReference>
<dbReference type="InterPro" id="IPR006204">
    <property type="entry name" value="GHMP_kinase_N_dom"/>
</dbReference>
<dbReference type="InterPro" id="IPR004424">
    <property type="entry name" value="IspE"/>
</dbReference>
<dbReference type="InterPro" id="IPR020568">
    <property type="entry name" value="Ribosomal_Su5_D2-typ_SF"/>
</dbReference>
<dbReference type="InterPro" id="IPR014721">
    <property type="entry name" value="Ribsml_uS5_D2-typ_fold_subgr"/>
</dbReference>
<dbReference type="NCBIfam" id="TIGR00154">
    <property type="entry name" value="ispE"/>
    <property type="match status" value="1"/>
</dbReference>
<dbReference type="PANTHER" id="PTHR43527">
    <property type="entry name" value="4-DIPHOSPHOCYTIDYL-2-C-METHYL-D-ERYTHRITOL KINASE, CHLOROPLASTIC"/>
    <property type="match status" value="1"/>
</dbReference>
<dbReference type="PANTHER" id="PTHR43527:SF2">
    <property type="entry name" value="4-DIPHOSPHOCYTIDYL-2-C-METHYL-D-ERYTHRITOL KINASE, CHLOROPLASTIC"/>
    <property type="match status" value="1"/>
</dbReference>
<dbReference type="Pfam" id="PF08544">
    <property type="entry name" value="GHMP_kinases_C"/>
    <property type="match status" value="1"/>
</dbReference>
<dbReference type="Pfam" id="PF00288">
    <property type="entry name" value="GHMP_kinases_N"/>
    <property type="match status" value="1"/>
</dbReference>
<dbReference type="PIRSF" id="PIRSF010376">
    <property type="entry name" value="IspE"/>
    <property type="match status" value="1"/>
</dbReference>
<dbReference type="SUPFAM" id="SSF55060">
    <property type="entry name" value="GHMP Kinase, C-terminal domain"/>
    <property type="match status" value="1"/>
</dbReference>
<dbReference type="SUPFAM" id="SSF54211">
    <property type="entry name" value="Ribosomal protein S5 domain 2-like"/>
    <property type="match status" value="1"/>
</dbReference>
<feature type="chain" id="PRO_1000092105" description="4-diphosphocytidyl-2-C-methyl-D-erythritol kinase">
    <location>
        <begin position="1"/>
        <end position="291"/>
    </location>
</feature>
<feature type="active site" evidence="1">
    <location>
        <position position="10"/>
    </location>
</feature>
<feature type="active site" evidence="1">
    <location>
        <position position="141"/>
    </location>
</feature>
<feature type="binding site" evidence="1">
    <location>
        <begin position="99"/>
        <end position="109"/>
    </location>
    <ligand>
        <name>ATP</name>
        <dbReference type="ChEBI" id="CHEBI:30616"/>
    </ligand>
</feature>
<reference key="1">
    <citation type="journal article" date="2008" name="J. Bacteriol.">
        <title>Complete genome sequence of uropathogenic Proteus mirabilis, a master of both adherence and motility.</title>
        <authorList>
            <person name="Pearson M.M."/>
            <person name="Sebaihia M."/>
            <person name="Churcher C."/>
            <person name="Quail M.A."/>
            <person name="Seshasayee A.S."/>
            <person name="Luscombe N.M."/>
            <person name="Abdellah Z."/>
            <person name="Arrosmith C."/>
            <person name="Atkin B."/>
            <person name="Chillingworth T."/>
            <person name="Hauser H."/>
            <person name="Jagels K."/>
            <person name="Moule S."/>
            <person name="Mungall K."/>
            <person name="Norbertczak H."/>
            <person name="Rabbinowitsch E."/>
            <person name="Walker D."/>
            <person name="Whithead S."/>
            <person name="Thomson N.R."/>
            <person name="Rather P.N."/>
            <person name="Parkhill J."/>
            <person name="Mobley H.L.T."/>
        </authorList>
    </citation>
    <scope>NUCLEOTIDE SEQUENCE [LARGE SCALE GENOMIC DNA]</scope>
    <source>
        <strain>HI4320</strain>
    </source>
</reference>
<organism>
    <name type="scientific">Proteus mirabilis (strain HI4320)</name>
    <dbReference type="NCBI Taxonomy" id="529507"/>
    <lineage>
        <taxon>Bacteria</taxon>
        <taxon>Pseudomonadati</taxon>
        <taxon>Pseudomonadota</taxon>
        <taxon>Gammaproteobacteria</taxon>
        <taxon>Enterobacterales</taxon>
        <taxon>Morganellaceae</taxon>
        <taxon>Proteus</taxon>
    </lineage>
</organism>
<keyword id="KW-0067">ATP-binding</keyword>
<keyword id="KW-0414">Isoprene biosynthesis</keyword>
<keyword id="KW-0418">Kinase</keyword>
<keyword id="KW-0547">Nucleotide-binding</keyword>
<keyword id="KW-1185">Reference proteome</keyword>
<keyword id="KW-0808">Transferase</keyword>
<protein>
    <recommendedName>
        <fullName evidence="1">4-diphosphocytidyl-2-C-methyl-D-erythritol kinase</fullName>
        <shortName evidence="1">CMK</shortName>
        <ecNumber evidence="1">2.7.1.148</ecNumber>
    </recommendedName>
    <alternativeName>
        <fullName evidence="1">4-(cytidine-5'-diphospho)-2-C-methyl-D-erythritol kinase</fullName>
    </alternativeName>
</protein>
<gene>
    <name evidence="1" type="primary">ispE</name>
    <name type="ordered locus">PMI1084</name>
</gene>
<sequence length="291" mass="31943">MTLSWPSPAKLNLFLYITGKRPDGYHNLQTLFQFLDYGDTLTFTPRNDTQLTILTPVEGVADEDNLIIKAAKLLRQYCYQHHIPLRYQGADISIDKKLPMGGGLGGGSSNAATTLIALNYHWQAGLSDETLATLGVTLGADVPVFVKGHAAFAEGIGEILTPASPKECWYLVAHPGISIPTPTIFTDPELKRNSPIRSLGALLQAPFANDCEMIARKRFREVEYLLSWLLEYAPSRLTGTGACVFGEFESQEAASEVLINAPEWVHGFVAQGVNISPVHLFRSRIPVLLHP</sequence>
<proteinExistence type="inferred from homology"/>
<accession>B4EVR4</accession>
<comment type="function">
    <text evidence="1">Catalyzes the phosphorylation of the position 2 hydroxy group of 4-diphosphocytidyl-2C-methyl-D-erythritol.</text>
</comment>
<comment type="catalytic activity">
    <reaction evidence="1">
        <text>4-CDP-2-C-methyl-D-erythritol + ATP = 4-CDP-2-C-methyl-D-erythritol 2-phosphate + ADP + H(+)</text>
        <dbReference type="Rhea" id="RHEA:18437"/>
        <dbReference type="ChEBI" id="CHEBI:15378"/>
        <dbReference type="ChEBI" id="CHEBI:30616"/>
        <dbReference type="ChEBI" id="CHEBI:57823"/>
        <dbReference type="ChEBI" id="CHEBI:57919"/>
        <dbReference type="ChEBI" id="CHEBI:456216"/>
        <dbReference type="EC" id="2.7.1.148"/>
    </reaction>
</comment>
<comment type="pathway">
    <text evidence="1">Isoprenoid biosynthesis; isopentenyl diphosphate biosynthesis via DXP pathway; isopentenyl diphosphate from 1-deoxy-D-xylulose 5-phosphate: step 3/6.</text>
</comment>
<comment type="subunit">
    <text evidence="1">Homodimer.</text>
</comment>
<comment type="similarity">
    <text evidence="1">Belongs to the GHMP kinase family. IspE subfamily.</text>
</comment>
<evidence type="ECO:0000255" key="1">
    <source>
        <dbReference type="HAMAP-Rule" id="MF_00061"/>
    </source>
</evidence>